<gene>
    <name type="primary">FZR2</name>
    <name type="synonym">CCS52A1</name>
    <name type="synonym">CDH1-2</name>
    <name type="ordered locus">At4g22910</name>
    <name type="ORF">F7H19.90</name>
</gene>
<name>FZR2_ARATH</name>
<sequence length="483" mass="52840">MEEEDPTASNVITNSNSSSMRNLSPAMNTPVVSLESRINRLINANQSQSPSPSSLSRSIYSDRFIPSRSGSNFALFDLSPSPSKDGKEDGAGSYATLLRAAMFGPETPEKRDITGFSSSRNIFRFKTETHRSLNSFSPFGVDDDSPGVSHSGPVKAPRKVPRSPYKVLDAPALQDDFYLNLVDWSAQNVLAVGLGNCVYLWNACSSKVTKLCDLGAEDSVCSVGWALRGTHLAVGTSTGKVQIWDASRCKRTRTMEGHRLRVGALAWGSSVLSSGSRDKSILQRDIRCQEDHVSKLAGHKSEVCGLKWSYDNRELASGGNDNRLFVWNQHSTQPVLKYSEHTAAVKAIAWSPHVHGLLASGGGTADRCIRFWNTTTNTHLSSIDTCSQVCNLAWSKNVNELVSTHGYSQNQIIVWKYPTMSKIATLTGHTYRVLYLAVSPDGQTIVTGAGDETLRFWNVFPSPKSQNTDSEIGSSFFGRTTIR</sequence>
<evidence type="ECO:0000256" key="1">
    <source>
        <dbReference type="SAM" id="MobiDB-lite"/>
    </source>
</evidence>
<evidence type="ECO:0000269" key="2">
    <source>
    </source>
</evidence>
<evidence type="ECO:0000269" key="3">
    <source>
    </source>
</evidence>
<evidence type="ECO:0000269" key="4">
    <source>
    </source>
</evidence>
<evidence type="ECO:0000269" key="5">
    <source>
    </source>
</evidence>
<evidence type="ECO:0000269" key="6">
    <source>
    </source>
</evidence>
<evidence type="ECO:0000269" key="7">
    <source>
    </source>
</evidence>
<evidence type="ECO:0000269" key="8">
    <source>
    </source>
</evidence>
<evidence type="ECO:0000305" key="9"/>
<evidence type="ECO:0000305" key="10">
    <source>
    </source>
</evidence>
<reference key="1">
    <citation type="journal article" date="1999" name="Nature">
        <title>Sequence and analysis of chromosome 4 of the plant Arabidopsis thaliana.</title>
        <authorList>
            <person name="Mayer K.F.X."/>
            <person name="Schueller C."/>
            <person name="Wambutt R."/>
            <person name="Murphy G."/>
            <person name="Volckaert G."/>
            <person name="Pohl T."/>
            <person name="Duesterhoeft A."/>
            <person name="Stiekema W."/>
            <person name="Entian K.-D."/>
            <person name="Terryn N."/>
            <person name="Harris B."/>
            <person name="Ansorge W."/>
            <person name="Brandt P."/>
            <person name="Grivell L.A."/>
            <person name="Rieger M."/>
            <person name="Weichselgartner M."/>
            <person name="de Simone V."/>
            <person name="Obermaier B."/>
            <person name="Mache R."/>
            <person name="Mueller M."/>
            <person name="Kreis M."/>
            <person name="Delseny M."/>
            <person name="Puigdomenech P."/>
            <person name="Watson M."/>
            <person name="Schmidtheini T."/>
            <person name="Reichert B."/>
            <person name="Portetelle D."/>
            <person name="Perez-Alonso M."/>
            <person name="Boutry M."/>
            <person name="Bancroft I."/>
            <person name="Vos P."/>
            <person name="Hoheisel J."/>
            <person name="Zimmermann W."/>
            <person name="Wedler H."/>
            <person name="Ridley P."/>
            <person name="Langham S.-A."/>
            <person name="McCullagh B."/>
            <person name="Bilham L."/>
            <person name="Robben J."/>
            <person name="van der Schueren J."/>
            <person name="Grymonprez B."/>
            <person name="Chuang Y.-J."/>
            <person name="Vandenbussche F."/>
            <person name="Braeken M."/>
            <person name="Weltjens I."/>
            <person name="Voet M."/>
            <person name="Bastiaens I."/>
            <person name="Aert R."/>
            <person name="Defoor E."/>
            <person name="Weitzenegger T."/>
            <person name="Bothe G."/>
            <person name="Ramsperger U."/>
            <person name="Hilbert H."/>
            <person name="Braun M."/>
            <person name="Holzer E."/>
            <person name="Brandt A."/>
            <person name="Peters S."/>
            <person name="van Staveren M."/>
            <person name="Dirkse W."/>
            <person name="Mooijman P."/>
            <person name="Klein Lankhorst R."/>
            <person name="Rose M."/>
            <person name="Hauf J."/>
            <person name="Koetter P."/>
            <person name="Berneiser S."/>
            <person name="Hempel S."/>
            <person name="Feldpausch M."/>
            <person name="Lamberth S."/>
            <person name="Van den Daele H."/>
            <person name="De Keyser A."/>
            <person name="Buysshaert C."/>
            <person name="Gielen J."/>
            <person name="Villarroel R."/>
            <person name="De Clercq R."/>
            <person name="van Montagu M."/>
            <person name="Rogers J."/>
            <person name="Cronin A."/>
            <person name="Quail M.A."/>
            <person name="Bray-Allen S."/>
            <person name="Clark L."/>
            <person name="Doggett J."/>
            <person name="Hall S."/>
            <person name="Kay M."/>
            <person name="Lennard N."/>
            <person name="McLay K."/>
            <person name="Mayes R."/>
            <person name="Pettett A."/>
            <person name="Rajandream M.A."/>
            <person name="Lyne M."/>
            <person name="Benes V."/>
            <person name="Rechmann S."/>
            <person name="Borkova D."/>
            <person name="Bloecker H."/>
            <person name="Scharfe M."/>
            <person name="Grimm M."/>
            <person name="Loehnert T.-H."/>
            <person name="Dose S."/>
            <person name="de Haan M."/>
            <person name="Maarse A.C."/>
            <person name="Schaefer M."/>
            <person name="Mueller-Auer S."/>
            <person name="Gabel C."/>
            <person name="Fuchs M."/>
            <person name="Fartmann B."/>
            <person name="Granderath K."/>
            <person name="Dauner D."/>
            <person name="Herzl A."/>
            <person name="Neumann S."/>
            <person name="Argiriou A."/>
            <person name="Vitale D."/>
            <person name="Liguori R."/>
            <person name="Piravandi E."/>
            <person name="Massenet O."/>
            <person name="Quigley F."/>
            <person name="Clabauld G."/>
            <person name="Muendlein A."/>
            <person name="Felber R."/>
            <person name="Schnabl S."/>
            <person name="Hiller R."/>
            <person name="Schmidt W."/>
            <person name="Lecharny A."/>
            <person name="Aubourg S."/>
            <person name="Chefdor F."/>
            <person name="Cooke R."/>
            <person name="Berger C."/>
            <person name="Monfort A."/>
            <person name="Casacuberta E."/>
            <person name="Gibbons T."/>
            <person name="Weber N."/>
            <person name="Vandenbol M."/>
            <person name="Bargues M."/>
            <person name="Terol J."/>
            <person name="Torres A."/>
            <person name="Perez-Perez A."/>
            <person name="Purnelle B."/>
            <person name="Bent E."/>
            <person name="Johnson S."/>
            <person name="Tacon D."/>
            <person name="Jesse T."/>
            <person name="Heijnen L."/>
            <person name="Schwarz S."/>
            <person name="Scholler P."/>
            <person name="Heber S."/>
            <person name="Francs P."/>
            <person name="Bielke C."/>
            <person name="Frishman D."/>
            <person name="Haase D."/>
            <person name="Lemcke K."/>
            <person name="Mewes H.-W."/>
            <person name="Stocker S."/>
            <person name="Zaccaria P."/>
            <person name="Bevan M."/>
            <person name="Wilson R.K."/>
            <person name="de la Bastide M."/>
            <person name="Habermann K."/>
            <person name="Parnell L."/>
            <person name="Dedhia N."/>
            <person name="Gnoj L."/>
            <person name="Schutz K."/>
            <person name="Huang E."/>
            <person name="Spiegel L."/>
            <person name="Sekhon M."/>
            <person name="Murray J."/>
            <person name="Sheet P."/>
            <person name="Cordes M."/>
            <person name="Abu-Threideh J."/>
            <person name="Stoneking T."/>
            <person name="Kalicki J."/>
            <person name="Graves T."/>
            <person name="Harmon G."/>
            <person name="Edwards J."/>
            <person name="Latreille P."/>
            <person name="Courtney L."/>
            <person name="Cloud J."/>
            <person name="Abbott A."/>
            <person name="Scott K."/>
            <person name="Johnson D."/>
            <person name="Minx P."/>
            <person name="Bentley D."/>
            <person name="Fulton B."/>
            <person name="Miller N."/>
            <person name="Greco T."/>
            <person name="Kemp K."/>
            <person name="Kramer J."/>
            <person name="Fulton L."/>
            <person name="Mardis E."/>
            <person name="Dante M."/>
            <person name="Pepin K."/>
            <person name="Hillier L.W."/>
            <person name="Nelson J."/>
            <person name="Spieth J."/>
            <person name="Ryan E."/>
            <person name="Andrews S."/>
            <person name="Geisel C."/>
            <person name="Layman D."/>
            <person name="Du H."/>
            <person name="Ali J."/>
            <person name="Berghoff A."/>
            <person name="Jones K."/>
            <person name="Drone K."/>
            <person name="Cotton M."/>
            <person name="Joshu C."/>
            <person name="Antonoiu B."/>
            <person name="Zidanic M."/>
            <person name="Strong C."/>
            <person name="Sun H."/>
            <person name="Lamar B."/>
            <person name="Yordan C."/>
            <person name="Ma P."/>
            <person name="Zhong J."/>
            <person name="Preston R."/>
            <person name="Vil D."/>
            <person name="Shekher M."/>
            <person name="Matero A."/>
            <person name="Shah R."/>
            <person name="Swaby I.K."/>
            <person name="O'Shaughnessy A."/>
            <person name="Rodriguez M."/>
            <person name="Hoffman J."/>
            <person name="Till S."/>
            <person name="Granat S."/>
            <person name="Shohdy N."/>
            <person name="Hasegawa A."/>
            <person name="Hameed A."/>
            <person name="Lodhi M."/>
            <person name="Johnson A."/>
            <person name="Chen E."/>
            <person name="Marra M.A."/>
            <person name="Martienssen R."/>
            <person name="McCombie W.R."/>
        </authorList>
    </citation>
    <scope>NUCLEOTIDE SEQUENCE [LARGE SCALE GENOMIC DNA]</scope>
    <source>
        <strain>cv. Columbia</strain>
    </source>
</reference>
<reference key="2">
    <citation type="journal article" date="2017" name="Plant J.">
        <title>Araport11: a complete reannotation of the Arabidopsis thaliana reference genome.</title>
        <authorList>
            <person name="Cheng C.Y."/>
            <person name="Krishnakumar V."/>
            <person name="Chan A.P."/>
            <person name="Thibaud-Nissen F."/>
            <person name="Schobel S."/>
            <person name="Town C.D."/>
        </authorList>
    </citation>
    <scope>GENOME REANNOTATION</scope>
    <source>
        <strain>cv. Columbia</strain>
    </source>
</reference>
<reference key="3">
    <citation type="journal article" date="2003" name="Science">
        <title>Empirical analysis of transcriptional activity in the Arabidopsis genome.</title>
        <authorList>
            <person name="Yamada K."/>
            <person name="Lim J."/>
            <person name="Dale J.M."/>
            <person name="Chen H."/>
            <person name="Shinn P."/>
            <person name="Palm C.J."/>
            <person name="Southwick A.M."/>
            <person name="Wu H.C."/>
            <person name="Kim C.J."/>
            <person name="Nguyen M."/>
            <person name="Pham P.K."/>
            <person name="Cheuk R.F."/>
            <person name="Karlin-Newmann G."/>
            <person name="Liu S.X."/>
            <person name="Lam B."/>
            <person name="Sakano H."/>
            <person name="Wu T."/>
            <person name="Yu G."/>
            <person name="Miranda M."/>
            <person name="Quach H.L."/>
            <person name="Tripp M."/>
            <person name="Chang C.H."/>
            <person name="Lee J.M."/>
            <person name="Toriumi M.J."/>
            <person name="Chan M.M."/>
            <person name="Tang C.C."/>
            <person name="Onodera C.S."/>
            <person name="Deng J.M."/>
            <person name="Akiyama K."/>
            <person name="Ansari Y."/>
            <person name="Arakawa T."/>
            <person name="Banh J."/>
            <person name="Banno F."/>
            <person name="Bowser L."/>
            <person name="Brooks S.Y."/>
            <person name="Carninci P."/>
            <person name="Chao Q."/>
            <person name="Choy N."/>
            <person name="Enju A."/>
            <person name="Goldsmith A.D."/>
            <person name="Gurjal M."/>
            <person name="Hansen N.F."/>
            <person name="Hayashizaki Y."/>
            <person name="Johnson-Hopson C."/>
            <person name="Hsuan V.W."/>
            <person name="Iida K."/>
            <person name="Karnes M."/>
            <person name="Khan S."/>
            <person name="Koesema E."/>
            <person name="Ishida J."/>
            <person name="Jiang P.X."/>
            <person name="Jones T."/>
            <person name="Kawai J."/>
            <person name="Kamiya A."/>
            <person name="Meyers C."/>
            <person name="Nakajima M."/>
            <person name="Narusaka M."/>
            <person name="Seki M."/>
            <person name="Sakurai T."/>
            <person name="Satou M."/>
            <person name="Tamse R."/>
            <person name="Vaysberg M."/>
            <person name="Wallender E.K."/>
            <person name="Wong C."/>
            <person name="Yamamura Y."/>
            <person name="Yuan S."/>
            <person name="Shinozaki K."/>
            <person name="Davis R.W."/>
            <person name="Theologis A."/>
            <person name="Ecker J.R."/>
        </authorList>
    </citation>
    <scope>NUCLEOTIDE SEQUENCE [LARGE SCALE MRNA]</scope>
    <source>
        <strain>cv. Columbia</strain>
    </source>
</reference>
<reference key="4">
    <citation type="journal article" date="2003" name="Trends Plant Sci.">
        <title>First glance at the plant APC/C, a highly conserved ubiquitin-protein ligase.</title>
        <authorList>
            <person name="Capron A."/>
            <person name="Okresz L."/>
            <person name="Genschik P."/>
        </authorList>
    </citation>
    <scope>REVIEW</scope>
</reference>
<reference key="5">
    <citation type="journal article" date="2005" name="Cell Cycle">
        <title>Arabidopsis anaphase-promoting complexes: multiple activators and wide range of substrates might keep APC perpetually busy.</title>
        <authorList>
            <person name="Fueloep K."/>
            <person name="Tarayre S."/>
            <person name="Kelemen Z."/>
            <person name="Horvath G."/>
            <person name="Kevei Z."/>
            <person name="Nikovics K."/>
            <person name="Bako L."/>
            <person name="Brown S."/>
            <person name="Kondorosi A."/>
            <person name="Kondorosi E."/>
        </authorList>
    </citation>
    <scope>FUNCTION</scope>
    <scope>DEVELOPMENTAL STAGE</scope>
    <scope>ASSOCIATION WITH THE APC/C COMPLEX</scope>
    <scope>INTERACTION WITH CYCA1-1; CYCA1-2; CYCA3-4; CYCB1-1 AND CYCB1-2</scope>
</reference>
<reference key="6">
    <citation type="journal article" date="2009" name="Plant Physiol.">
        <title>FZR2/CCS52A1 expression is a determinant of endoreduplication and cell expansion in Arabidopsis.</title>
        <authorList>
            <person name="Larson-Rabin Z."/>
            <person name="Li Z."/>
            <person name="Masson P.H."/>
            <person name="Day C.D."/>
        </authorList>
    </citation>
    <scope>FUNCTION</scope>
    <scope>TISSUE SPECIFICITY</scope>
    <scope>DISRUPTION PHENOTYPE</scope>
</reference>
<reference key="7">
    <citation type="journal article" date="2009" name="Proc. Natl. Acad. Sci. U.S.A.">
        <title>APC/C-CCS52A complexes control meristem maintenance in the Arabidopsis root.</title>
        <authorList>
            <person name="Vanstraelen M."/>
            <person name="Baloban M."/>
            <person name="Da Ines O."/>
            <person name="Cultrone A."/>
            <person name="Lammens T."/>
            <person name="Boudolf V."/>
            <person name="Brown S.C."/>
            <person name="De Veylder L."/>
            <person name="Mergaert P."/>
            <person name="Kondorosi E."/>
        </authorList>
    </citation>
    <scope>FUNCTION</scope>
    <scope>DISRUPTION PHENOTYPE</scope>
    <scope>TISSUE SPECIFICITY</scope>
    <scope>SUBCELLULAR LOCATION</scope>
</reference>
<reference key="8">
    <citation type="journal article" date="2010" name="BMC Plant Biol.">
        <title>Genomic evolution and complexity of the Anaphase-promoting Complex (APC) in land plants.</title>
        <authorList>
            <person name="Lima M.D.F."/>
            <person name="Eloy N.B."/>
            <person name="Pegoraro C."/>
            <person name="Sagit R."/>
            <person name="Rojas C."/>
            <person name="Bretz T."/>
            <person name="Vargas L."/>
            <person name="Elofsson A."/>
            <person name="de Oliveira A.C."/>
            <person name="Hemerly A.S."/>
            <person name="Ferreira P.C.G."/>
        </authorList>
    </citation>
    <scope>REVIEW</scope>
    <scope>GENE FAMILY</scope>
</reference>
<reference key="9">
    <citation type="journal article" date="2011" name="Plant Cell">
        <title>GIGAS CELL1, a novel negative regulator of the anaphase-promoting complex/cyclosome, is required for proper mitotic progression and cell fate determination in Arabidopsis.</title>
        <authorList>
            <person name="Iwata E."/>
            <person name="Ikeda S."/>
            <person name="Matsunaga S."/>
            <person name="Kurata M."/>
            <person name="Yoshioka Y."/>
            <person name="Criqui M.-C."/>
            <person name="Genschik P."/>
            <person name="Ito M."/>
        </authorList>
    </citation>
    <scope>INTERACTION WITH GIG1 AND PYM</scope>
</reference>
<reference key="10">
    <citation type="journal article" date="2011" name="Plant Cell">
        <title>Arabidopsis ULTRAVIOLET-B-INSENSITIVE4 maintains cell division activity by temporal inhibition of the anaphase-promoting complex/cyclosome.</title>
        <authorList>
            <person name="Heyman J."/>
            <person name="Van den Daele H."/>
            <person name="De Wit K."/>
            <person name="Boudolf V."/>
            <person name="Berckmans B."/>
            <person name="Verkest A."/>
            <person name="Alvim Kamei C.L."/>
            <person name="De Jaeger G."/>
            <person name="Koncz C."/>
            <person name="De Veylder L."/>
        </authorList>
    </citation>
    <scope>INTERACTION WITH PYM</scope>
</reference>
<reference key="11">
    <citation type="journal article" date="2011" name="PLoS ONE">
        <title>Conserved CDC20 cell cycle functions are carried out by two of the five isoforms in Arabidopsis thaliana.</title>
        <authorList>
            <person name="Kevei Z."/>
            <person name="Baloban M."/>
            <person name="Da Ines O."/>
            <person name="Tiricz H."/>
            <person name="Kroll A."/>
            <person name="Regulski K."/>
            <person name="Mergaert P."/>
            <person name="Kondorosi E."/>
        </authorList>
    </citation>
    <scope>INTERACTION WITH CDC20-1 AND CDC20-2</scope>
</reference>
<reference key="12">
    <citation type="journal article" date="2012" name="PLoS Genet.">
        <title>OSD1 promotes meiotic progression via APC/C inhibition and forms a regulatory network with TDM and CYCA1;2/TAM.</title>
        <authorList>
            <person name="Cromer L."/>
            <person name="Heyman J."/>
            <person name="Touati S."/>
            <person name="Harashima H."/>
            <person name="Araou E."/>
            <person name="Girard C."/>
            <person name="Horlow C."/>
            <person name="Wassmann K."/>
            <person name="Schnittger A."/>
            <person name="De Veylder L."/>
            <person name="Mercier R."/>
        </authorList>
    </citation>
    <scope>INTERACTION WITH GIG1</scope>
</reference>
<comment type="function">
    <text evidence="2 3 4">Activator protein that regulates the ubiquitin ligase activity and substrate specificity of the anaphase promoting complex/cyclosome (APC/C). Necessary and sufficient for endoreduplication and correct cell expansion. Controls meristem size by stimulating endoreduplication in the elongation zone.</text>
</comment>
<comment type="pathway">
    <text>Protein modification; protein ubiquitination.</text>
</comment>
<comment type="subunit">
    <text evidence="2 5 6 7 8">Associates with the APC/C complex. Interacts with CDC20-1, CDC20-2, CYCA1-1, CYCA1-2, CYCA3-4, CYCB1-1 and CYCB1-2. Binds to GIG1 and PYM.</text>
</comment>
<comment type="subcellular location">
    <subcellularLocation>
        <location evidence="4">Nucleus</location>
    </subcellularLocation>
</comment>
<comment type="tissue specificity">
    <text evidence="3 4">Expressed in seedlings, flowers, leaves and roots. Expressed in the differentiating cell files of the root elongation zone.</text>
</comment>
<comment type="developmental stage">
    <text evidence="2">Expressed from late M until late S-early G2 phases.</text>
</comment>
<comment type="disruption phenotype">
    <text evidence="3 4">Reduced endoreduplication and reduced expansion in trichomes and other leaf cells. Longer roots. Root meristem contains more dividing cells with a delayed onset of endoreduplication.</text>
</comment>
<comment type="miscellaneous">
    <text>FZR2 controls the induction of early rounds of endoreduplication while the remaining rounds may be mediated by FZR1 and FZR3.</text>
</comment>
<comment type="miscellaneous">
    <text evidence="10">FZR1 and FZR2 are functional homologs, and their functional divergence in root development arises from the different expression patterns.</text>
</comment>
<comment type="similarity">
    <text evidence="9">Belongs to the WD repeat CDC20/Fizzy family.</text>
</comment>
<comment type="sequence caution" evidence="9">
    <conflict type="erroneous gene model prediction">
        <sequence resource="EMBL-CDS" id="CAA19806"/>
    </conflict>
</comment>
<comment type="sequence caution" evidence="9">
    <conflict type="erroneous gene model prediction">
        <sequence resource="EMBL-CDS" id="CAB79246"/>
    </conflict>
</comment>
<comment type="online information" name="Arabidopsis APC/C subunits">
    <link uri="http://personal.rhul.ac.uk/ujba/110/apc/APC.htm"/>
</comment>
<accession>Q8L3Z8</accession>
<accession>O82740</accession>
<protein>
    <recommendedName>
        <fullName>Protein FIZZY-RELATED 2</fullName>
    </recommendedName>
    <alternativeName>
        <fullName>Cell cycle switch protein CCS52A1</fullName>
    </alternativeName>
</protein>
<keyword id="KW-0131">Cell cycle</keyword>
<keyword id="KW-0132">Cell division</keyword>
<keyword id="KW-0498">Mitosis</keyword>
<keyword id="KW-0539">Nucleus</keyword>
<keyword id="KW-1185">Reference proteome</keyword>
<keyword id="KW-0677">Repeat</keyword>
<keyword id="KW-0833">Ubl conjugation pathway</keyword>
<keyword id="KW-0853">WD repeat</keyword>
<dbReference type="EMBL" id="AL031018">
    <property type="protein sequence ID" value="CAA19806.1"/>
    <property type="status" value="ALT_SEQ"/>
    <property type="molecule type" value="Genomic_DNA"/>
</dbReference>
<dbReference type="EMBL" id="AL161558">
    <property type="protein sequence ID" value="CAB79246.1"/>
    <property type="status" value="ALT_SEQ"/>
    <property type="molecule type" value="Genomic_DNA"/>
</dbReference>
<dbReference type="EMBL" id="CP002687">
    <property type="protein sequence ID" value="AEE84680.1"/>
    <property type="molecule type" value="Genomic_DNA"/>
</dbReference>
<dbReference type="EMBL" id="AY099585">
    <property type="protein sequence ID" value="AAM20437.1"/>
    <property type="molecule type" value="mRNA"/>
</dbReference>
<dbReference type="EMBL" id="AY128834">
    <property type="protein sequence ID" value="AAM91234.1"/>
    <property type="molecule type" value="mRNA"/>
</dbReference>
<dbReference type="PIR" id="T05122">
    <property type="entry name" value="T05122"/>
</dbReference>
<dbReference type="RefSeq" id="NP_194022.3">
    <property type="nucleotide sequence ID" value="NM_118420.5"/>
</dbReference>
<dbReference type="SMR" id="Q8L3Z8"/>
<dbReference type="BioGRID" id="13679">
    <property type="interactions" value="29"/>
</dbReference>
<dbReference type="ELM" id="Q8L3Z8"/>
<dbReference type="FunCoup" id="Q8L3Z8">
    <property type="interactions" value="3542"/>
</dbReference>
<dbReference type="IntAct" id="Q8L3Z8">
    <property type="interactions" value="21"/>
</dbReference>
<dbReference type="STRING" id="3702.Q8L3Z8"/>
<dbReference type="iPTMnet" id="Q8L3Z8"/>
<dbReference type="PaxDb" id="3702-AT4G22910.1"/>
<dbReference type="ProteomicsDB" id="230440"/>
<dbReference type="EnsemblPlants" id="AT4G22910.1">
    <property type="protein sequence ID" value="AT4G22910.1"/>
    <property type="gene ID" value="AT4G22910"/>
</dbReference>
<dbReference type="GeneID" id="828390"/>
<dbReference type="Gramene" id="AT4G22910.1">
    <property type="protein sequence ID" value="AT4G22910.1"/>
    <property type="gene ID" value="AT4G22910"/>
</dbReference>
<dbReference type="KEGG" id="ath:AT4G22910"/>
<dbReference type="Araport" id="AT4G22910"/>
<dbReference type="TAIR" id="AT4G22910">
    <property type="gene designation" value="FZR2"/>
</dbReference>
<dbReference type="eggNOG" id="KOG0305">
    <property type="taxonomic scope" value="Eukaryota"/>
</dbReference>
<dbReference type="HOGENOM" id="CLU_014831_4_1_1"/>
<dbReference type="InParanoid" id="Q8L3Z8"/>
<dbReference type="OMA" id="GKHDNRV"/>
<dbReference type="OrthoDB" id="10263272at2759"/>
<dbReference type="PhylomeDB" id="Q8L3Z8"/>
<dbReference type="UniPathway" id="UPA00143"/>
<dbReference type="PRO" id="PR:Q8L3Z8"/>
<dbReference type="Proteomes" id="UP000006548">
    <property type="component" value="Chromosome 4"/>
</dbReference>
<dbReference type="ExpressionAtlas" id="Q8L3Z8">
    <property type="expression patterns" value="baseline and differential"/>
</dbReference>
<dbReference type="GO" id="GO:0005634">
    <property type="term" value="C:nucleus"/>
    <property type="evidence" value="ECO:0007669"/>
    <property type="project" value="UniProtKB-SubCell"/>
</dbReference>
<dbReference type="GO" id="GO:0010997">
    <property type="term" value="F:anaphase-promoting complex binding"/>
    <property type="evidence" value="ECO:0007669"/>
    <property type="project" value="InterPro"/>
</dbReference>
<dbReference type="GO" id="GO:0097027">
    <property type="term" value="F:ubiquitin-protein transferase activator activity"/>
    <property type="evidence" value="ECO:0007669"/>
    <property type="project" value="InterPro"/>
</dbReference>
<dbReference type="GO" id="GO:0051301">
    <property type="term" value="P:cell division"/>
    <property type="evidence" value="ECO:0007669"/>
    <property type="project" value="UniProtKB-KW"/>
</dbReference>
<dbReference type="GO" id="GO:0042023">
    <property type="term" value="P:DNA endoreduplication"/>
    <property type="evidence" value="ECO:0000315"/>
    <property type="project" value="TAIR"/>
</dbReference>
<dbReference type="GO" id="GO:0009825">
    <property type="term" value="P:multidimensional cell growth"/>
    <property type="evidence" value="ECO:0000315"/>
    <property type="project" value="TAIR"/>
</dbReference>
<dbReference type="GO" id="GO:0016567">
    <property type="term" value="P:protein ubiquitination"/>
    <property type="evidence" value="ECO:0007669"/>
    <property type="project" value="UniProtKB-UniPathway"/>
</dbReference>
<dbReference type="GO" id="GO:0010091">
    <property type="term" value="P:trichome branching"/>
    <property type="evidence" value="ECO:0000315"/>
    <property type="project" value="TAIR"/>
</dbReference>
<dbReference type="FunFam" id="2.130.10.10:FF:000025">
    <property type="entry name" value="FIZZY-related 2 isoform 1"/>
    <property type="match status" value="1"/>
</dbReference>
<dbReference type="Gene3D" id="2.130.10.10">
    <property type="entry name" value="YVTN repeat-like/Quinoprotein amine dehydrogenase"/>
    <property type="match status" value="1"/>
</dbReference>
<dbReference type="InterPro" id="IPR033010">
    <property type="entry name" value="Cdc20/Fizzy"/>
</dbReference>
<dbReference type="InterPro" id="IPR015943">
    <property type="entry name" value="WD40/YVTN_repeat-like_dom_sf"/>
</dbReference>
<dbReference type="InterPro" id="IPR056150">
    <property type="entry name" value="WD40_CDC20-Fz"/>
</dbReference>
<dbReference type="InterPro" id="IPR019775">
    <property type="entry name" value="WD40_repeat_CS"/>
</dbReference>
<dbReference type="InterPro" id="IPR036322">
    <property type="entry name" value="WD40_repeat_dom_sf"/>
</dbReference>
<dbReference type="InterPro" id="IPR001680">
    <property type="entry name" value="WD40_rpt"/>
</dbReference>
<dbReference type="PANTHER" id="PTHR19918">
    <property type="entry name" value="CELL DIVISION CYCLE 20 CDC20 FIZZY -RELATED"/>
    <property type="match status" value="1"/>
</dbReference>
<dbReference type="PANTHER" id="PTHR19918:SF61">
    <property type="entry name" value="PROTEIN FIZZY-RELATED 2"/>
    <property type="match status" value="1"/>
</dbReference>
<dbReference type="Pfam" id="PF24807">
    <property type="entry name" value="WD40_CDC20-Fz"/>
    <property type="match status" value="1"/>
</dbReference>
<dbReference type="SMART" id="SM00320">
    <property type="entry name" value="WD40"/>
    <property type="match status" value="7"/>
</dbReference>
<dbReference type="SUPFAM" id="SSF50978">
    <property type="entry name" value="WD40 repeat-like"/>
    <property type="match status" value="1"/>
</dbReference>
<dbReference type="PROSITE" id="PS00678">
    <property type="entry name" value="WD_REPEATS_1"/>
    <property type="match status" value="2"/>
</dbReference>
<dbReference type="PROSITE" id="PS50082">
    <property type="entry name" value="WD_REPEATS_2"/>
    <property type="match status" value="2"/>
</dbReference>
<dbReference type="PROSITE" id="PS50294">
    <property type="entry name" value="WD_REPEATS_REGION"/>
    <property type="match status" value="1"/>
</dbReference>
<proteinExistence type="evidence at protein level"/>
<organism>
    <name type="scientific">Arabidopsis thaliana</name>
    <name type="common">Mouse-ear cress</name>
    <dbReference type="NCBI Taxonomy" id="3702"/>
    <lineage>
        <taxon>Eukaryota</taxon>
        <taxon>Viridiplantae</taxon>
        <taxon>Streptophyta</taxon>
        <taxon>Embryophyta</taxon>
        <taxon>Tracheophyta</taxon>
        <taxon>Spermatophyta</taxon>
        <taxon>Magnoliopsida</taxon>
        <taxon>eudicotyledons</taxon>
        <taxon>Gunneridae</taxon>
        <taxon>Pentapetalae</taxon>
        <taxon>rosids</taxon>
        <taxon>malvids</taxon>
        <taxon>Brassicales</taxon>
        <taxon>Brassicaceae</taxon>
        <taxon>Camelineae</taxon>
        <taxon>Arabidopsis</taxon>
    </lineage>
</organism>
<feature type="chain" id="PRO_0000364436" description="Protein FIZZY-RELATED 2">
    <location>
        <begin position="1"/>
        <end position="483"/>
    </location>
</feature>
<feature type="repeat" description="WD 1">
    <location>
        <begin position="174"/>
        <end position="211"/>
    </location>
</feature>
<feature type="repeat" description="WD 2">
    <location>
        <begin position="215"/>
        <end position="254"/>
    </location>
</feature>
<feature type="repeat" description="WD 3">
    <location>
        <begin position="257"/>
        <end position="294"/>
    </location>
</feature>
<feature type="repeat" description="WD 4">
    <location>
        <begin position="298"/>
        <end position="337"/>
    </location>
</feature>
<feature type="repeat" description="WD 5">
    <location>
        <begin position="340"/>
        <end position="382"/>
    </location>
</feature>
<feature type="repeat" description="WD 6">
    <location>
        <begin position="384"/>
        <end position="425"/>
    </location>
</feature>
<feature type="repeat" description="WD 7">
    <location>
        <begin position="428"/>
        <end position="467"/>
    </location>
</feature>
<feature type="region of interest" description="Disordered" evidence="1">
    <location>
        <begin position="1"/>
        <end position="28"/>
    </location>
</feature>
<feature type="compositionally biased region" description="Polar residues" evidence="1">
    <location>
        <begin position="7"/>
        <end position="28"/>
    </location>
</feature>